<sequence length="207" mass="20979">MGSQASKGGVAVEGKAAAADPAAVKTNGQENGHVKTNGDVSAKAEGDAATTNGSAEAAKESEAGAGDAIEPAPAAEGEAAKPEGEATKETPKKKKKKFSLKNSFKFKGISLKKSKKNAEVKEEAAAAAPATEEKPEENGAATEEKKEEEAKAEETPAAPVETPKAEEPAAKAEEPAAAKEEAAAPAVEATKQTEETNSTPAPSEQKE</sequence>
<feature type="initiator methionine" description="Removed" evidence="1">
    <location>
        <position position="1"/>
    </location>
</feature>
<feature type="chain" id="PRO_0000445478" description="MARCKS-related protein 1-B">
    <location>
        <begin position="2"/>
        <end position="207"/>
    </location>
</feature>
<feature type="region of interest" description="Disordered" evidence="2">
    <location>
        <begin position="1"/>
        <end position="207"/>
    </location>
</feature>
<feature type="region of interest" description="Effector domain involved in lipid-binding" evidence="1">
    <location>
        <begin position="93"/>
        <end position="116"/>
    </location>
</feature>
<feature type="compositionally biased region" description="Low complexity" evidence="2">
    <location>
        <begin position="1"/>
        <end position="25"/>
    </location>
</feature>
<feature type="compositionally biased region" description="Low complexity" evidence="2">
    <location>
        <begin position="63"/>
        <end position="77"/>
    </location>
</feature>
<feature type="compositionally biased region" description="Basic and acidic residues" evidence="2">
    <location>
        <begin position="78"/>
        <end position="90"/>
    </location>
</feature>
<feature type="compositionally biased region" description="Low complexity" evidence="2">
    <location>
        <begin position="100"/>
        <end position="109"/>
    </location>
</feature>
<feature type="compositionally biased region" description="Basic and acidic residues" evidence="2">
    <location>
        <begin position="131"/>
        <end position="154"/>
    </location>
</feature>
<feature type="compositionally biased region" description="Basic and acidic residues" evidence="2">
    <location>
        <begin position="163"/>
        <end position="182"/>
    </location>
</feature>
<feature type="compositionally biased region" description="Polar residues" evidence="2">
    <location>
        <begin position="195"/>
        <end position="207"/>
    </location>
</feature>
<feature type="lipid moiety-binding region" description="N-myristoyl glycine" evidence="1">
    <location>
        <position position="2"/>
    </location>
</feature>
<keyword id="KW-1003">Cell membrane</keyword>
<keyword id="KW-0963">Cytoplasm</keyword>
<keyword id="KW-0206">Cytoskeleton</keyword>
<keyword id="KW-0449">Lipoprotein</keyword>
<keyword id="KW-0472">Membrane</keyword>
<keyword id="KW-0519">Myristate</keyword>
<keyword id="KW-1185">Reference proteome</keyword>
<dbReference type="EMBL" id="JF894246">
    <property type="protein sequence ID" value="AEQ28196.1"/>
    <property type="molecule type" value="mRNA"/>
</dbReference>
<dbReference type="EMBL" id="CU861666">
    <property type="status" value="NOT_ANNOTATED_CDS"/>
    <property type="molecule type" value="Genomic_DNA"/>
</dbReference>
<dbReference type="EMBL" id="BC067590">
    <property type="protein sequence ID" value="AAH67590.1"/>
    <property type="molecule type" value="mRNA"/>
</dbReference>
<dbReference type="EMBL" id="BC154302">
    <property type="protein sequence ID" value="AAI54303.1"/>
    <property type="molecule type" value="mRNA"/>
</dbReference>
<dbReference type="RefSeq" id="NP_998388.1">
    <property type="nucleotide sequence ID" value="NM_213223.1"/>
</dbReference>
<dbReference type="STRING" id="7955.ENSDARP00000051803"/>
<dbReference type="PaxDb" id="7955-ENSDARP00000051803"/>
<dbReference type="Ensembl" id="ENSDART00000051804">
    <property type="protein sequence ID" value="ENSDARP00000051803"/>
    <property type="gene ID" value="ENSDARG00000035715"/>
</dbReference>
<dbReference type="Ensembl" id="ENSDART00000167803">
    <property type="protein sequence ID" value="ENSDARP00000130507"/>
    <property type="gene ID" value="ENSDARG00000035715"/>
</dbReference>
<dbReference type="GeneID" id="406504"/>
<dbReference type="KEGG" id="dre:406504"/>
<dbReference type="AGR" id="ZFIN:ZDB-GENE-040426-2315"/>
<dbReference type="CTD" id="406504"/>
<dbReference type="ZFIN" id="ZDB-GENE-040426-2315">
    <property type="gene designation" value="marcksl1b"/>
</dbReference>
<dbReference type="eggNOG" id="ENOG502RYXK">
    <property type="taxonomic scope" value="Eukaryota"/>
</dbReference>
<dbReference type="InParanoid" id="Q6NWH2"/>
<dbReference type="OMA" id="CQPTRIR"/>
<dbReference type="TreeFam" id="TF332815"/>
<dbReference type="PRO" id="PR:Q6NWH2"/>
<dbReference type="Proteomes" id="UP000000437">
    <property type="component" value="Chromosome 19"/>
</dbReference>
<dbReference type="Bgee" id="ENSDARG00000035715">
    <property type="expression patterns" value="Expressed in brain and 25 other cell types or tissues"/>
</dbReference>
<dbReference type="GO" id="GO:0005737">
    <property type="term" value="C:cytoplasm"/>
    <property type="evidence" value="ECO:0000318"/>
    <property type="project" value="GO_Central"/>
</dbReference>
<dbReference type="GO" id="GO:0005856">
    <property type="term" value="C:cytoskeleton"/>
    <property type="evidence" value="ECO:0007669"/>
    <property type="project" value="UniProtKB-SubCell"/>
</dbReference>
<dbReference type="GO" id="GO:0005886">
    <property type="term" value="C:plasma membrane"/>
    <property type="evidence" value="ECO:0000318"/>
    <property type="project" value="GO_Central"/>
</dbReference>
<dbReference type="GO" id="GO:0051015">
    <property type="term" value="F:actin filament binding"/>
    <property type="evidence" value="ECO:0000318"/>
    <property type="project" value="GO_Central"/>
</dbReference>
<dbReference type="GO" id="GO:0005516">
    <property type="term" value="F:calmodulin binding"/>
    <property type="evidence" value="ECO:0007669"/>
    <property type="project" value="InterPro"/>
</dbReference>
<dbReference type="GO" id="GO:0007015">
    <property type="term" value="P:actin filament organization"/>
    <property type="evidence" value="ECO:0000318"/>
    <property type="project" value="GO_Central"/>
</dbReference>
<dbReference type="GO" id="GO:0072554">
    <property type="term" value="P:blood vessel lumenization"/>
    <property type="evidence" value="ECO:0000315"/>
    <property type="project" value="ZFIN"/>
</dbReference>
<dbReference type="GO" id="GO:0051216">
    <property type="term" value="P:cartilage development"/>
    <property type="evidence" value="ECO:0000315"/>
    <property type="project" value="ZFIN"/>
</dbReference>
<dbReference type="GO" id="GO:0007417">
    <property type="term" value="P:central nervous system development"/>
    <property type="evidence" value="ECO:0000315"/>
    <property type="project" value="ZFIN"/>
</dbReference>
<dbReference type="GO" id="GO:0003407">
    <property type="term" value="P:neural retina development"/>
    <property type="evidence" value="ECO:0000315"/>
    <property type="project" value="ZFIN"/>
</dbReference>
<dbReference type="InterPro" id="IPR002101">
    <property type="entry name" value="MARCKS"/>
</dbReference>
<dbReference type="PANTHER" id="PTHR14353:SF13">
    <property type="entry name" value="MARCKS-RELATED PROTEIN 1-B"/>
    <property type="match status" value="1"/>
</dbReference>
<dbReference type="PANTHER" id="PTHR14353">
    <property type="entry name" value="MYRISTOYLATED ALANINE-RICH C-KINASE SUBSTRATE MARCKS"/>
    <property type="match status" value="1"/>
</dbReference>
<dbReference type="Pfam" id="PF02063">
    <property type="entry name" value="MARCKS"/>
    <property type="match status" value="1"/>
</dbReference>
<dbReference type="PRINTS" id="PR00963">
    <property type="entry name" value="MARCKS"/>
</dbReference>
<dbReference type="PROSITE" id="PS00826">
    <property type="entry name" value="MARCKS_1"/>
    <property type="match status" value="1"/>
</dbReference>
<evidence type="ECO:0000250" key="1">
    <source>
        <dbReference type="UniProtKB" id="P28667"/>
    </source>
</evidence>
<evidence type="ECO:0000256" key="2">
    <source>
        <dbReference type="SAM" id="MobiDB-lite"/>
    </source>
</evidence>
<evidence type="ECO:0000269" key="3">
    <source>
    </source>
</evidence>
<evidence type="ECO:0000303" key="4">
    <source>
    </source>
</evidence>
<evidence type="ECO:0000305" key="5"/>
<evidence type="ECO:0000312" key="6">
    <source>
        <dbReference type="EMBL" id="AAH67590.1"/>
    </source>
</evidence>
<evidence type="ECO:0000312" key="7">
    <source>
        <dbReference type="EMBL" id="AAI54303.1"/>
    </source>
</evidence>
<evidence type="ECO:0000312" key="8">
    <source>
        <dbReference type="EMBL" id="AEQ28196.1"/>
    </source>
</evidence>
<evidence type="ECO:0000312" key="9">
    <source>
        <dbReference type="Proteomes" id="UP000000437"/>
    </source>
</evidence>
<evidence type="ECO:0000312" key="10">
    <source>
        <dbReference type="ZFIN" id="ZDB-GENE-040426-2315"/>
    </source>
</evidence>
<accession>Q6NWH2</accession>
<comment type="function">
    <text evidence="1">Involved in the control of cell movement by regulating actin cytoskeleton homeostasis and filopodium and lamellipodium formation.</text>
</comment>
<comment type="subcellular location">
    <subcellularLocation>
        <location evidence="1">Cytoplasm</location>
        <location evidence="1">Cytoskeleton</location>
    </subcellularLocation>
    <subcellularLocation>
        <location evidence="1">Cell membrane</location>
        <topology evidence="1">Lipid-anchor</topology>
    </subcellularLocation>
    <text evidence="1">Associates with the membrane via the insertion of the N-terminal N-myristoyl chain and the partial insertion of the effector domain.</text>
</comment>
<comment type="tissue specificity">
    <text evidence="3">Strongly expressed in brain and eye. Also detected at lower levels in muscle.</text>
</comment>
<comment type="developmental stage">
    <text evidence="3">Detected from 24 to 72 hours post-fertilization (hpf).</text>
</comment>
<comment type="disruption phenotype">
    <text evidence="3">Morpholino knockdown of the protein results in reduced head and eye size, a ventrally curved body, and enlarged brain vesicles. In the craniofacial cartilage, the ceratobranchial arches are reduced. Formation of ceratohyal cartilage is disrupted with an abnormal angle relative to wild-type. Morphogenesis of the developing neural tube is abnormal, with a smaller angle between the walls of the hindbrain neuroepithelium at 24 hours post-fertilization (hpf) and in some cases a partial opening in the dorsal region. Some deformation of the midbrain walls is also found. Retinal development is significantly delayed; no retinal ganglion cells (RGCs) are detected at 30 hpf and reduced numbers are found at 60 hpf. RGCs also appear to be mislocalized. In about a third of embryos, three instead of two otoliths are detected in the inner ear. Cilium length in Kupffer's vesicle is significantly reduced. Cilia in the olfactory placode also appear to be fewer in number and have reduced length. Double morpholino knockdown of marcksl1a and marckls1b results in a more pronounced developmental delay in the retina. Double morpholino knockdown of marcksb and marcksl1b results in retinal morphogenesis defects of increased severity. The optic cup structure is not apparent, and very few atoh7-positive retinal ganglion cell precursors are detected. Double morpholino knockdown of marcksb and marcksl1b also results in more severe defects in neural tube morphology, with partial duplications of the neural tube in the hindbrain region.</text>
</comment>
<comment type="similarity">
    <text evidence="5">Belongs to the MARCKS family.</text>
</comment>
<name>MRPB_DANRE</name>
<proteinExistence type="evidence at transcript level"/>
<protein>
    <recommendedName>
        <fullName evidence="5">MARCKS-related protein 1-B</fullName>
    </recommendedName>
    <alternativeName>
        <fullName evidence="4">MARCKS-like protein 1-A</fullName>
    </alternativeName>
    <alternativeName>
        <fullName evidence="10">MARCKS-like protein 1-B</fullName>
    </alternativeName>
</protein>
<organism evidence="9">
    <name type="scientific">Danio rerio</name>
    <name type="common">Zebrafish</name>
    <name type="synonym">Brachydanio rerio</name>
    <dbReference type="NCBI Taxonomy" id="7955"/>
    <lineage>
        <taxon>Eukaryota</taxon>
        <taxon>Metazoa</taxon>
        <taxon>Chordata</taxon>
        <taxon>Craniata</taxon>
        <taxon>Vertebrata</taxon>
        <taxon>Euteleostomi</taxon>
        <taxon>Actinopterygii</taxon>
        <taxon>Neopterygii</taxon>
        <taxon>Teleostei</taxon>
        <taxon>Ostariophysi</taxon>
        <taxon>Cypriniformes</taxon>
        <taxon>Danionidae</taxon>
        <taxon>Danioninae</taxon>
        <taxon>Danio</taxon>
    </lineage>
</organism>
<reference evidence="8" key="1">
    <citation type="submission" date="2011-04" db="EMBL/GenBank/DDBJ databases">
        <title>Zebrafish marcks involved in dorso-ventral patterning of early development.</title>
        <authorList>
            <person name="Wei C."/>
            <person name="Wang Y."/>
            <person name="Sun Y."/>
        </authorList>
    </citation>
    <scope>NUCLEOTIDE SEQUENCE [MRNA]</scope>
</reference>
<reference evidence="9" key="2">
    <citation type="journal article" date="2013" name="Nature">
        <title>The zebrafish reference genome sequence and its relationship to the human genome.</title>
        <authorList>
            <person name="Howe K."/>
            <person name="Clark M.D."/>
            <person name="Torroja C.F."/>
            <person name="Torrance J."/>
            <person name="Berthelot C."/>
            <person name="Muffato M."/>
            <person name="Collins J.E."/>
            <person name="Humphray S."/>
            <person name="McLaren K."/>
            <person name="Matthews L."/>
            <person name="McLaren S."/>
            <person name="Sealy I."/>
            <person name="Caccamo M."/>
            <person name="Churcher C."/>
            <person name="Scott C."/>
            <person name="Barrett J.C."/>
            <person name="Koch R."/>
            <person name="Rauch G.J."/>
            <person name="White S."/>
            <person name="Chow W."/>
            <person name="Kilian B."/>
            <person name="Quintais L.T."/>
            <person name="Guerra-Assuncao J.A."/>
            <person name="Zhou Y."/>
            <person name="Gu Y."/>
            <person name="Yen J."/>
            <person name="Vogel J.H."/>
            <person name="Eyre T."/>
            <person name="Redmond S."/>
            <person name="Banerjee R."/>
            <person name="Chi J."/>
            <person name="Fu B."/>
            <person name="Langley E."/>
            <person name="Maguire S.F."/>
            <person name="Laird G.K."/>
            <person name="Lloyd D."/>
            <person name="Kenyon E."/>
            <person name="Donaldson S."/>
            <person name="Sehra H."/>
            <person name="Almeida-King J."/>
            <person name="Loveland J."/>
            <person name="Trevanion S."/>
            <person name="Jones M."/>
            <person name="Quail M."/>
            <person name="Willey D."/>
            <person name="Hunt A."/>
            <person name="Burton J."/>
            <person name="Sims S."/>
            <person name="McLay K."/>
            <person name="Plumb B."/>
            <person name="Davis J."/>
            <person name="Clee C."/>
            <person name="Oliver K."/>
            <person name="Clark R."/>
            <person name="Riddle C."/>
            <person name="Elliot D."/>
            <person name="Threadgold G."/>
            <person name="Harden G."/>
            <person name="Ware D."/>
            <person name="Begum S."/>
            <person name="Mortimore B."/>
            <person name="Kerry G."/>
            <person name="Heath P."/>
            <person name="Phillimore B."/>
            <person name="Tracey A."/>
            <person name="Corby N."/>
            <person name="Dunn M."/>
            <person name="Johnson C."/>
            <person name="Wood J."/>
            <person name="Clark S."/>
            <person name="Pelan S."/>
            <person name="Griffiths G."/>
            <person name="Smith M."/>
            <person name="Glithero R."/>
            <person name="Howden P."/>
            <person name="Barker N."/>
            <person name="Lloyd C."/>
            <person name="Stevens C."/>
            <person name="Harley J."/>
            <person name="Holt K."/>
            <person name="Panagiotidis G."/>
            <person name="Lovell J."/>
            <person name="Beasley H."/>
            <person name="Henderson C."/>
            <person name="Gordon D."/>
            <person name="Auger K."/>
            <person name="Wright D."/>
            <person name="Collins J."/>
            <person name="Raisen C."/>
            <person name="Dyer L."/>
            <person name="Leung K."/>
            <person name="Robertson L."/>
            <person name="Ambridge K."/>
            <person name="Leongamornlert D."/>
            <person name="McGuire S."/>
            <person name="Gilderthorp R."/>
            <person name="Griffiths C."/>
            <person name="Manthravadi D."/>
            <person name="Nichol S."/>
            <person name="Barker G."/>
            <person name="Whitehead S."/>
            <person name="Kay M."/>
            <person name="Brown J."/>
            <person name="Murnane C."/>
            <person name="Gray E."/>
            <person name="Humphries M."/>
            <person name="Sycamore N."/>
            <person name="Barker D."/>
            <person name="Saunders D."/>
            <person name="Wallis J."/>
            <person name="Babbage A."/>
            <person name="Hammond S."/>
            <person name="Mashreghi-Mohammadi M."/>
            <person name="Barr L."/>
            <person name="Martin S."/>
            <person name="Wray P."/>
            <person name="Ellington A."/>
            <person name="Matthews N."/>
            <person name="Ellwood M."/>
            <person name="Woodmansey R."/>
            <person name="Clark G."/>
            <person name="Cooper J."/>
            <person name="Tromans A."/>
            <person name="Grafham D."/>
            <person name="Skuce C."/>
            <person name="Pandian R."/>
            <person name="Andrews R."/>
            <person name="Harrison E."/>
            <person name="Kimberley A."/>
            <person name="Garnett J."/>
            <person name="Fosker N."/>
            <person name="Hall R."/>
            <person name="Garner P."/>
            <person name="Kelly D."/>
            <person name="Bird C."/>
            <person name="Palmer S."/>
            <person name="Gehring I."/>
            <person name="Berger A."/>
            <person name="Dooley C.M."/>
            <person name="Ersan-Urun Z."/>
            <person name="Eser C."/>
            <person name="Geiger H."/>
            <person name="Geisler M."/>
            <person name="Karotki L."/>
            <person name="Kirn A."/>
            <person name="Konantz J."/>
            <person name="Konantz M."/>
            <person name="Oberlander M."/>
            <person name="Rudolph-Geiger S."/>
            <person name="Teucke M."/>
            <person name="Lanz C."/>
            <person name="Raddatz G."/>
            <person name="Osoegawa K."/>
            <person name="Zhu B."/>
            <person name="Rapp A."/>
            <person name="Widaa S."/>
            <person name="Langford C."/>
            <person name="Yang F."/>
            <person name="Schuster S.C."/>
            <person name="Carter N.P."/>
            <person name="Harrow J."/>
            <person name="Ning Z."/>
            <person name="Herrero J."/>
            <person name="Searle S.M."/>
            <person name="Enright A."/>
            <person name="Geisler R."/>
            <person name="Plasterk R.H."/>
            <person name="Lee C."/>
            <person name="Westerfield M."/>
            <person name="de Jong P.J."/>
            <person name="Zon L.I."/>
            <person name="Postlethwait J.H."/>
            <person name="Nusslein-Volhard C."/>
            <person name="Hubbard T.J."/>
            <person name="Roest Crollius H."/>
            <person name="Rogers J."/>
            <person name="Stemple D.L."/>
        </authorList>
    </citation>
    <scope>NUCLEOTIDE SEQUENCE [LARGE SCALE GENOMIC DNA]</scope>
    <source>
        <strain>Tuebingen</strain>
    </source>
</reference>
<reference evidence="6" key="3">
    <citation type="submission" date="2007-10" db="EMBL/GenBank/DDBJ databases">
        <authorList>
            <consortium name="NIH - Zebrafish Gene Collection (ZGC) project"/>
        </authorList>
    </citation>
    <scope>NUCLEOTIDE SEQUENCE [LARGE SCALE MRNA]</scope>
    <source>
        <tissue evidence="6">Embryo</tissue>
    </source>
</reference>
<reference evidence="5" key="4">
    <citation type="journal article" date="2017" name="J. Exp. Zool. B Mol. Dev. Evol.">
        <title>Functional diversification of the four MARCKS family members in zebrafish neural development.</title>
        <authorList>
            <person name="Prieto D."/>
            <person name="Zolessi F.R."/>
        </authorList>
    </citation>
    <scope>TISSUE SPECIFICITY</scope>
    <scope>DEVELOPMENTAL STAGE</scope>
    <scope>DISRUPTION PHENOTYPE</scope>
</reference>
<gene>
    <name evidence="10" type="primary">marcksl1b</name>
    <name evidence="4" type="synonym">marcksl1a</name>
    <name evidence="8" type="synonym">marcksl2</name>
    <name evidence="7" type="ORF">zgc:85717</name>
</gene>